<sequence length="543" mass="58221">MTVANHARPIRRALLSVSDKTGILEFAKALHAQGVELLSTGGTARLLADNGVPVIEVSDYTGHPEIMDGRVKTLHPKVHGGILARRGLDENVMAANNINAIDLVAVNLYPFADTVAKAGCTLEDAIENIDIGGPTMVRAAAKNHKDVTIVVNAADYNRVLAEMAVNNGSTTHATRFDLAIAAFEHTAGYDGMIANYFGTMVPMHRVPAHSTDECFQDSLSVEGSKFPRTFNTQLVKKQDLRYGENSHQAAAFYVDTKIDEASVATAVQLQGKALSYNNIADTDAALECVKEFSEPACVIVKHANPCGVALGKDLLDAYNRAYQTDPTSAFGGIIAFNGELDAATASAIVERQFVEVIIAPVVSQGARDVVAKKTNVRLLECGQWNTKTQTLDYKRVNGGLLVQDRDQGMVGLDDIKVVTKRQPTESELKDLMFCWKVAKFVKSNAIVYAKDGMTIGVGAGQMSRVYSAKIAGIKAADEGLEVVNSVMASDAFFPFRDGIDAAAAAGISCIIQPGGSMRDAEIIAAADEHGMAMVMTGMRHFRH</sequence>
<proteinExistence type="inferred from homology"/>
<name>PUR9_SHEON</name>
<evidence type="ECO:0000255" key="1">
    <source>
        <dbReference type="HAMAP-Rule" id="MF_00139"/>
    </source>
</evidence>
<evidence type="ECO:0000255" key="2">
    <source>
        <dbReference type="PROSITE-ProRule" id="PRU01202"/>
    </source>
</evidence>
<keyword id="KW-0378">Hydrolase</keyword>
<keyword id="KW-0511">Multifunctional enzyme</keyword>
<keyword id="KW-0658">Purine biosynthesis</keyword>
<keyword id="KW-1185">Reference proteome</keyword>
<keyword id="KW-0808">Transferase</keyword>
<feature type="chain" id="PRO_0000192121" description="Bifunctional purine biosynthesis protein PurH">
    <location>
        <begin position="1"/>
        <end position="543"/>
    </location>
</feature>
<feature type="domain" description="MGS-like" evidence="2">
    <location>
        <begin position="5"/>
        <end position="151"/>
    </location>
</feature>
<comment type="catalytic activity">
    <reaction evidence="1">
        <text>(6R)-10-formyltetrahydrofolate + 5-amino-1-(5-phospho-beta-D-ribosyl)imidazole-4-carboxamide = 5-formamido-1-(5-phospho-D-ribosyl)imidazole-4-carboxamide + (6S)-5,6,7,8-tetrahydrofolate</text>
        <dbReference type="Rhea" id="RHEA:22192"/>
        <dbReference type="ChEBI" id="CHEBI:57453"/>
        <dbReference type="ChEBI" id="CHEBI:58467"/>
        <dbReference type="ChEBI" id="CHEBI:58475"/>
        <dbReference type="ChEBI" id="CHEBI:195366"/>
        <dbReference type="EC" id="2.1.2.3"/>
    </reaction>
</comment>
<comment type="catalytic activity">
    <reaction evidence="1">
        <text>IMP + H2O = 5-formamido-1-(5-phospho-D-ribosyl)imidazole-4-carboxamide</text>
        <dbReference type="Rhea" id="RHEA:18445"/>
        <dbReference type="ChEBI" id="CHEBI:15377"/>
        <dbReference type="ChEBI" id="CHEBI:58053"/>
        <dbReference type="ChEBI" id="CHEBI:58467"/>
        <dbReference type="EC" id="3.5.4.10"/>
    </reaction>
</comment>
<comment type="pathway">
    <text evidence="1">Purine metabolism; IMP biosynthesis via de novo pathway; 5-formamido-1-(5-phospho-D-ribosyl)imidazole-4-carboxamide from 5-amino-1-(5-phospho-D-ribosyl)imidazole-4-carboxamide (10-formyl THF route): step 1/1.</text>
</comment>
<comment type="pathway">
    <text evidence="1">Purine metabolism; IMP biosynthesis via de novo pathway; IMP from 5-formamido-1-(5-phospho-D-ribosyl)imidazole-4-carboxamide: step 1/1.</text>
</comment>
<comment type="domain">
    <text evidence="1">The IMP cyclohydrolase activity resides in the N-terminal region.</text>
</comment>
<comment type="similarity">
    <text evidence="1">Belongs to the PurH family.</text>
</comment>
<gene>
    <name evidence="1" type="primary">purH</name>
    <name type="ordered locus">SO_0442</name>
</gene>
<accession>Q8EJM1</accession>
<organism>
    <name type="scientific">Shewanella oneidensis (strain ATCC 700550 / JCM 31522 / CIP 106686 / LMG 19005 / NCIMB 14063 / MR-1)</name>
    <dbReference type="NCBI Taxonomy" id="211586"/>
    <lineage>
        <taxon>Bacteria</taxon>
        <taxon>Pseudomonadati</taxon>
        <taxon>Pseudomonadota</taxon>
        <taxon>Gammaproteobacteria</taxon>
        <taxon>Alteromonadales</taxon>
        <taxon>Shewanellaceae</taxon>
        <taxon>Shewanella</taxon>
    </lineage>
</organism>
<dbReference type="EC" id="2.1.2.3" evidence="1"/>
<dbReference type="EC" id="3.5.4.10" evidence="1"/>
<dbReference type="EMBL" id="AE014299">
    <property type="protein sequence ID" value="AAN53524.1"/>
    <property type="molecule type" value="Genomic_DNA"/>
</dbReference>
<dbReference type="RefSeq" id="NP_716079.1">
    <property type="nucleotide sequence ID" value="NC_004347.2"/>
</dbReference>
<dbReference type="RefSeq" id="WP_011070798.1">
    <property type="nucleotide sequence ID" value="NC_004347.2"/>
</dbReference>
<dbReference type="SMR" id="Q8EJM1"/>
<dbReference type="STRING" id="211586.SO_0442"/>
<dbReference type="PaxDb" id="211586-SO_0442"/>
<dbReference type="KEGG" id="son:SO_0442"/>
<dbReference type="PATRIC" id="fig|211586.12.peg.431"/>
<dbReference type="eggNOG" id="COG0138">
    <property type="taxonomic scope" value="Bacteria"/>
</dbReference>
<dbReference type="HOGENOM" id="CLU_016316_5_2_6"/>
<dbReference type="OrthoDB" id="9802065at2"/>
<dbReference type="PhylomeDB" id="Q8EJM1"/>
<dbReference type="BioCyc" id="SONE211586:G1GMP-423-MONOMER"/>
<dbReference type="UniPathway" id="UPA00074">
    <property type="reaction ID" value="UER00133"/>
</dbReference>
<dbReference type="UniPathway" id="UPA00074">
    <property type="reaction ID" value="UER00135"/>
</dbReference>
<dbReference type="Proteomes" id="UP000008186">
    <property type="component" value="Chromosome"/>
</dbReference>
<dbReference type="GO" id="GO:0005829">
    <property type="term" value="C:cytosol"/>
    <property type="evidence" value="ECO:0000318"/>
    <property type="project" value="GO_Central"/>
</dbReference>
<dbReference type="GO" id="GO:0003937">
    <property type="term" value="F:IMP cyclohydrolase activity"/>
    <property type="evidence" value="ECO:0000318"/>
    <property type="project" value="GO_Central"/>
</dbReference>
<dbReference type="GO" id="GO:0004643">
    <property type="term" value="F:phosphoribosylaminoimidazolecarboxamide formyltransferase activity"/>
    <property type="evidence" value="ECO:0000318"/>
    <property type="project" value="GO_Central"/>
</dbReference>
<dbReference type="GO" id="GO:0006189">
    <property type="term" value="P:'de novo' IMP biosynthetic process"/>
    <property type="evidence" value="ECO:0000318"/>
    <property type="project" value="GO_Central"/>
</dbReference>
<dbReference type="CDD" id="cd01421">
    <property type="entry name" value="IMPCH"/>
    <property type="match status" value="1"/>
</dbReference>
<dbReference type="FunFam" id="3.40.140.20:FF:000001">
    <property type="entry name" value="Bifunctional purine biosynthesis protein PurH"/>
    <property type="match status" value="1"/>
</dbReference>
<dbReference type="FunFam" id="3.40.140.20:FF:000002">
    <property type="entry name" value="Bifunctional purine biosynthesis protein PurH"/>
    <property type="match status" value="1"/>
</dbReference>
<dbReference type="FunFam" id="3.40.50.1380:FF:000001">
    <property type="entry name" value="Bifunctional purine biosynthesis protein PurH"/>
    <property type="match status" value="1"/>
</dbReference>
<dbReference type="Gene3D" id="3.40.140.20">
    <property type="match status" value="2"/>
</dbReference>
<dbReference type="Gene3D" id="3.40.50.1380">
    <property type="entry name" value="Methylglyoxal synthase-like domain"/>
    <property type="match status" value="1"/>
</dbReference>
<dbReference type="HAMAP" id="MF_00139">
    <property type="entry name" value="PurH"/>
    <property type="match status" value="1"/>
</dbReference>
<dbReference type="InterPro" id="IPR024051">
    <property type="entry name" value="AICAR_Tfase_dup_dom_sf"/>
</dbReference>
<dbReference type="InterPro" id="IPR016193">
    <property type="entry name" value="Cytidine_deaminase-like"/>
</dbReference>
<dbReference type="InterPro" id="IPR011607">
    <property type="entry name" value="MGS-like_dom"/>
</dbReference>
<dbReference type="InterPro" id="IPR036914">
    <property type="entry name" value="MGS-like_dom_sf"/>
</dbReference>
<dbReference type="InterPro" id="IPR002695">
    <property type="entry name" value="PurH-like"/>
</dbReference>
<dbReference type="NCBIfam" id="NF002049">
    <property type="entry name" value="PRK00881.1"/>
    <property type="match status" value="1"/>
</dbReference>
<dbReference type="NCBIfam" id="TIGR00355">
    <property type="entry name" value="purH"/>
    <property type="match status" value="1"/>
</dbReference>
<dbReference type="PANTHER" id="PTHR11692:SF0">
    <property type="entry name" value="BIFUNCTIONAL PURINE BIOSYNTHESIS PROTEIN ATIC"/>
    <property type="match status" value="1"/>
</dbReference>
<dbReference type="PANTHER" id="PTHR11692">
    <property type="entry name" value="BIFUNCTIONAL PURINE BIOSYNTHESIS PROTEIN PURH"/>
    <property type="match status" value="1"/>
</dbReference>
<dbReference type="Pfam" id="PF01808">
    <property type="entry name" value="AICARFT_IMPCHas"/>
    <property type="match status" value="1"/>
</dbReference>
<dbReference type="Pfam" id="PF02142">
    <property type="entry name" value="MGS"/>
    <property type="match status" value="1"/>
</dbReference>
<dbReference type="PIRSF" id="PIRSF000414">
    <property type="entry name" value="AICARFT_IMPCHas"/>
    <property type="match status" value="1"/>
</dbReference>
<dbReference type="SMART" id="SM00798">
    <property type="entry name" value="AICARFT_IMPCHas"/>
    <property type="match status" value="1"/>
</dbReference>
<dbReference type="SMART" id="SM00851">
    <property type="entry name" value="MGS"/>
    <property type="match status" value="1"/>
</dbReference>
<dbReference type="SUPFAM" id="SSF53927">
    <property type="entry name" value="Cytidine deaminase-like"/>
    <property type="match status" value="1"/>
</dbReference>
<dbReference type="SUPFAM" id="SSF52335">
    <property type="entry name" value="Methylglyoxal synthase-like"/>
    <property type="match status" value="1"/>
</dbReference>
<dbReference type="PROSITE" id="PS51855">
    <property type="entry name" value="MGS"/>
    <property type="match status" value="1"/>
</dbReference>
<protein>
    <recommendedName>
        <fullName evidence="1">Bifunctional purine biosynthesis protein PurH</fullName>
    </recommendedName>
    <domain>
        <recommendedName>
            <fullName evidence="1">Phosphoribosylaminoimidazolecarboxamide formyltransferase</fullName>
            <ecNumber evidence="1">2.1.2.3</ecNumber>
        </recommendedName>
        <alternativeName>
            <fullName evidence="1">AICAR transformylase</fullName>
        </alternativeName>
    </domain>
    <domain>
        <recommendedName>
            <fullName evidence="1">IMP cyclohydrolase</fullName>
            <ecNumber evidence="1">3.5.4.10</ecNumber>
        </recommendedName>
        <alternativeName>
            <fullName evidence="1">ATIC</fullName>
        </alternativeName>
        <alternativeName>
            <fullName evidence="1">IMP synthase</fullName>
        </alternativeName>
        <alternativeName>
            <fullName evidence="1">Inosinicase</fullName>
        </alternativeName>
    </domain>
</protein>
<reference key="1">
    <citation type="journal article" date="2002" name="Nat. Biotechnol.">
        <title>Genome sequence of the dissimilatory metal ion-reducing bacterium Shewanella oneidensis.</title>
        <authorList>
            <person name="Heidelberg J.F."/>
            <person name="Paulsen I.T."/>
            <person name="Nelson K.E."/>
            <person name="Gaidos E.J."/>
            <person name="Nelson W.C."/>
            <person name="Read T.D."/>
            <person name="Eisen J.A."/>
            <person name="Seshadri R."/>
            <person name="Ward N.L."/>
            <person name="Methe B.A."/>
            <person name="Clayton R.A."/>
            <person name="Meyer T."/>
            <person name="Tsapin A."/>
            <person name="Scott J."/>
            <person name="Beanan M.J."/>
            <person name="Brinkac L.M."/>
            <person name="Daugherty S.C."/>
            <person name="DeBoy R.T."/>
            <person name="Dodson R.J."/>
            <person name="Durkin A.S."/>
            <person name="Haft D.H."/>
            <person name="Kolonay J.F."/>
            <person name="Madupu R."/>
            <person name="Peterson J.D."/>
            <person name="Umayam L.A."/>
            <person name="White O."/>
            <person name="Wolf A.M."/>
            <person name="Vamathevan J.J."/>
            <person name="Weidman J.F."/>
            <person name="Impraim M."/>
            <person name="Lee K."/>
            <person name="Berry K.J."/>
            <person name="Lee C."/>
            <person name="Mueller J."/>
            <person name="Khouri H.M."/>
            <person name="Gill J."/>
            <person name="Utterback T.R."/>
            <person name="McDonald L.A."/>
            <person name="Feldblyum T.V."/>
            <person name="Smith H.O."/>
            <person name="Venter J.C."/>
            <person name="Nealson K.H."/>
            <person name="Fraser C.M."/>
        </authorList>
    </citation>
    <scope>NUCLEOTIDE SEQUENCE [LARGE SCALE GENOMIC DNA]</scope>
    <source>
        <strain>ATCC 700550 / JCM 31522 / CIP 106686 / LMG 19005 / NCIMB 14063 / MR-1</strain>
    </source>
</reference>